<evidence type="ECO:0000255" key="1">
    <source>
        <dbReference type="HAMAP-Rule" id="MF_01477"/>
    </source>
</evidence>
<evidence type="ECO:0000269" key="2">
    <source>
    </source>
</evidence>
<evidence type="ECO:0000269" key="3">
    <source>
    </source>
</evidence>
<evidence type="ECO:0000269" key="4">
    <source>
    </source>
</evidence>
<evidence type="ECO:0000303" key="5">
    <source>
    </source>
</evidence>
<evidence type="ECO:0000303" key="6">
    <source>
    </source>
</evidence>
<evidence type="ECO:0000305" key="7"/>
<evidence type="ECO:0007744" key="8">
    <source>
        <dbReference type="PDB" id="7BL2"/>
    </source>
</evidence>
<evidence type="ECO:0007744" key="9">
    <source>
        <dbReference type="PDB" id="7BL3"/>
    </source>
</evidence>
<evidence type="ECO:0007744" key="10">
    <source>
        <dbReference type="PDB" id="7BL4"/>
    </source>
</evidence>
<evidence type="ECO:0007744" key="11">
    <source>
        <dbReference type="PDB" id="7BL5"/>
    </source>
</evidence>
<evidence type="ECO:0007829" key="12">
    <source>
        <dbReference type="PDB" id="7BL4"/>
    </source>
</evidence>
<accession>P0AAT6</accession>
<accession>P05848</accession>
<accession>P77107</accession>
<reference key="1">
    <citation type="journal article" date="1986" name="Eur. J. Biochem.">
        <title>Nucleotide sequence of the pbpA gene and characteristics of the deduced amino acid sequence of penicillin-binding protein 2 of Escherichia coli K12.</title>
        <authorList>
            <person name="Asoh S."/>
            <person name="Matsuzawa H."/>
            <person name="Ishino F."/>
            <person name="Strominger J.L."/>
            <person name="Matsuhashi M."/>
            <person name="Ohta T."/>
        </authorList>
    </citation>
    <scope>NUCLEOTIDE SEQUENCE [GENOMIC DNA]</scope>
    <source>
        <strain>K12</strain>
    </source>
</reference>
<reference key="2">
    <citation type="journal article" date="1996" name="DNA Res.">
        <title>A 718-kb DNA sequence of the Escherichia coli K-12 genome corresponding to the 12.7-28.0 min region on the linkage map.</title>
        <authorList>
            <person name="Oshima T."/>
            <person name="Aiba H."/>
            <person name="Baba T."/>
            <person name="Fujita K."/>
            <person name="Hayashi K."/>
            <person name="Honjo A."/>
            <person name="Ikemoto K."/>
            <person name="Inada T."/>
            <person name="Itoh T."/>
            <person name="Kajihara M."/>
            <person name="Kanai K."/>
            <person name="Kashimoto K."/>
            <person name="Kimura S."/>
            <person name="Kitagawa M."/>
            <person name="Makino K."/>
            <person name="Masuda S."/>
            <person name="Miki T."/>
            <person name="Mizobuchi K."/>
            <person name="Mori H."/>
            <person name="Motomura K."/>
            <person name="Nakamura Y."/>
            <person name="Nashimoto H."/>
            <person name="Nishio Y."/>
            <person name="Saito N."/>
            <person name="Sampei G."/>
            <person name="Seki Y."/>
            <person name="Tagami H."/>
            <person name="Takemoto K."/>
            <person name="Wada C."/>
            <person name="Yamamoto Y."/>
            <person name="Yano M."/>
            <person name="Horiuchi T."/>
        </authorList>
    </citation>
    <scope>NUCLEOTIDE SEQUENCE [LARGE SCALE GENOMIC DNA]</scope>
    <source>
        <strain>K12 / W3110 / ATCC 27325 / DSM 5911</strain>
    </source>
</reference>
<reference key="3">
    <citation type="submission" date="1997-01" db="EMBL/GenBank/DDBJ databases">
        <title>Sequence of minutes 4-25 of Escherichia coli.</title>
        <authorList>
            <person name="Chung E."/>
            <person name="Allen E."/>
            <person name="Araujo R."/>
            <person name="Aparicio A.M."/>
            <person name="Davis K."/>
            <person name="Duncan M."/>
            <person name="Federspiel N."/>
            <person name="Hyman R."/>
            <person name="Kalman S."/>
            <person name="Komp C."/>
            <person name="Kurdi O."/>
            <person name="Lew H."/>
            <person name="Lin D."/>
            <person name="Namath A."/>
            <person name="Oefner P."/>
            <person name="Roberts D."/>
            <person name="Schramm S."/>
            <person name="Davis R.W."/>
        </authorList>
    </citation>
    <scope>NUCLEOTIDE SEQUENCE [LARGE SCALE GENOMIC DNA]</scope>
    <source>
        <strain>K12 / MG1655 / ATCC 47076</strain>
    </source>
</reference>
<reference key="4">
    <citation type="journal article" date="1997" name="Science">
        <title>The complete genome sequence of Escherichia coli K-12.</title>
        <authorList>
            <person name="Blattner F.R."/>
            <person name="Plunkett G. III"/>
            <person name="Bloch C.A."/>
            <person name="Perna N.T."/>
            <person name="Burland V."/>
            <person name="Riley M."/>
            <person name="Collado-Vides J."/>
            <person name="Glasner J.D."/>
            <person name="Rode C.K."/>
            <person name="Mayhew G.F."/>
            <person name="Gregor J."/>
            <person name="Davis N.W."/>
            <person name="Kirkpatrick H.A."/>
            <person name="Goeden M.A."/>
            <person name="Rose D.J."/>
            <person name="Mau B."/>
            <person name="Shao Y."/>
        </authorList>
    </citation>
    <scope>NUCLEOTIDE SEQUENCE [LARGE SCALE GENOMIC DNA]</scope>
    <source>
        <strain>K12 / MG1655 / ATCC 47076</strain>
    </source>
</reference>
<reference key="5">
    <citation type="journal article" date="2006" name="Mol. Syst. Biol.">
        <title>Highly accurate genome sequences of Escherichia coli K-12 strains MG1655 and W3110.</title>
        <authorList>
            <person name="Hayashi K."/>
            <person name="Morooka N."/>
            <person name="Yamamoto Y."/>
            <person name="Fujita K."/>
            <person name="Isono K."/>
            <person name="Choi S."/>
            <person name="Ohtsubo E."/>
            <person name="Baba T."/>
            <person name="Wanner B.L."/>
            <person name="Mori H."/>
            <person name="Horiuchi T."/>
        </authorList>
    </citation>
    <scope>NUCLEOTIDE SEQUENCE [LARGE SCALE GENOMIC DNA]</scope>
    <source>
        <strain>K12 / W3110 / ATCC 27325 / DSM 5911</strain>
    </source>
</reference>
<reference key="6">
    <citation type="journal article" date="2006" name="J. Bacteriol.">
        <title>The Escherichia coli GTPase CgtAE is involved in late steps of large ribosome assembly.</title>
        <authorList>
            <person name="Jiang M."/>
            <person name="Datta K."/>
            <person name="Walker A."/>
            <person name="Strahler J."/>
            <person name="Bagamasbad P."/>
            <person name="Andrews P.C."/>
            <person name="Maddock J.R."/>
        </authorList>
    </citation>
    <scope>IDENTIFICATION BY MASS SPECTROMETRY</scope>
    <scope>SUBCELLULAR LOCATION</scope>
    <scope>ASSOCIATION WITH THE 50S RIBOSOMAL SUBUNIT</scope>
    <source>
        <strain>K12 / MG1655 / ATCC 47076</strain>
    </source>
</reference>
<reference key="7">
    <citation type="journal article" date="2012" name="PLoS Genet.">
        <title>RsfA (YbeB) proteins are conserved ribosomal silencing factors.</title>
        <authorList>
            <person name="Hauser R."/>
            <person name="Pech M."/>
            <person name="Kijek J."/>
            <person name="Yamamoto H."/>
            <person name="Titz B."/>
            <person name="Naeve F."/>
            <person name="Tovchigrechko A."/>
            <person name="Yamamoto K."/>
            <person name="Szaflarski W."/>
            <person name="Takeuchi N."/>
            <person name="Stellberger T."/>
            <person name="Diefenbacher M.E."/>
            <person name="Nierhaus K.H."/>
            <person name="Uetz P."/>
        </authorList>
    </citation>
    <scope>FUNCTION</scope>
    <scope>INTERACTION WITH RIBOSOMAL PROTEIN UL14 (RPLN)</scope>
    <scope>DISRUPTION PHENOTYPE</scope>
    <source>
        <strain>K12 / MG1655 / ATCC 47076</strain>
    </source>
</reference>
<reference evidence="8 9 10 11" key="8">
    <citation type="journal article" date="2021" name="Mol. Cell">
        <title>Snapshots of native pre-50S ribosomes reveal a biogenesis factor network and evolutionary specialization.</title>
        <authorList>
            <person name="Nikolay R."/>
            <person name="Hilal T."/>
            <person name="Schmidt S."/>
            <person name="Qin B."/>
            <person name="Schwefel D."/>
            <person name="Vieira-Vieira C.H."/>
            <person name="Mielke T."/>
            <person name="Burger J."/>
            <person name="Loerke J."/>
            <person name="Amikura K."/>
            <person name="Flugel T."/>
            <person name="Ueda T."/>
            <person name="Selbach M."/>
            <person name="Deuerling E."/>
            <person name="Spahn C.M.T."/>
        </authorList>
    </citation>
    <scope>STRUCTURE BY ELECTRON MICROSCOPY (2.40 ANGSTROMS) IN ASSOCIATION WITH PRE-50S RIBOSOMAL SUBUNIT</scope>
    <scope>FUNCTION IN 50S RIBOSOMAL SUBUNIT BIOGENESIS</scope>
    <scope>SUBUNIT</scope>
    <scope>SUBCELLULAR LOCATION</scope>
    <source>
        <strain>K12 / MG1655 / ATCC 47076</strain>
    </source>
</reference>
<dbReference type="EMBL" id="X04516">
    <property type="protein sequence ID" value="CAA28199.1"/>
    <property type="status" value="ALT_INIT"/>
    <property type="molecule type" value="Genomic_DNA"/>
</dbReference>
<dbReference type="EMBL" id="U82598">
    <property type="protein sequence ID" value="AAB40837.1"/>
    <property type="molecule type" value="Genomic_DNA"/>
</dbReference>
<dbReference type="EMBL" id="U00096">
    <property type="protein sequence ID" value="AAC73738.2"/>
    <property type="molecule type" value="Genomic_DNA"/>
</dbReference>
<dbReference type="EMBL" id="AP009048">
    <property type="protein sequence ID" value="BAA35284.2"/>
    <property type="molecule type" value="Genomic_DNA"/>
</dbReference>
<dbReference type="RefSeq" id="NP_415170.4">
    <property type="nucleotide sequence ID" value="NC_000913.3"/>
</dbReference>
<dbReference type="RefSeq" id="WP_001161664.1">
    <property type="nucleotide sequence ID" value="NZ_STEB01000031.1"/>
</dbReference>
<dbReference type="PDB" id="7BL2">
    <property type="method" value="EM"/>
    <property type="resolution" value="3.70 A"/>
    <property type="chains" value="6=1-105"/>
</dbReference>
<dbReference type="PDB" id="7BL3">
    <property type="method" value="EM"/>
    <property type="resolution" value="3.50 A"/>
    <property type="chains" value="6=1-105"/>
</dbReference>
<dbReference type="PDB" id="7BL4">
    <property type="method" value="EM"/>
    <property type="resolution" value="2.40 A"/>
    <property type="chains" value="6=1-105"/>
</dbReference>
<dbReference type="PDB" id="7BL5">
    <property type="method" value="EM"/>
    <property type="resolution" value="3.30 A"/>
    <property type="chains" value="6=1-105"/>
</dbReference>
<dbReference type="PDBsum" id="7BL2"/>
<dbReference type="PDBsum" id="7BL3"/>
<dbReference type="PDBsum" id="7BL4"/>
<dbReference type="PDBsum" id="7BL5"/>
<dbReference type="EMDB" id="EMD-12215"/>
<dbReference type="EMDB" id="EMD-12216"/>
<dbReference type="EMDB" id="EMD-12217"/>
<dbReference type="EMDB" id="EMD-12218"/>
<dbReference type="SMR" id="P0AAT6"/>
<dbReference type="BioGRID" id="4261658">
    <property type="interactions" value="43"/>
</dbReference>
<dbReference type="DIP" id="DIP-48141N"/>
<dbReference type="FunCoup" id="P0AAT6">
    <property type="interactions" value="595"/>
</dbReference>
<dbReference type="IntAct" id="P0AAT6">
    <property type="interactions" value="10"/>
</dbReference>
<dbReference type="STRING" id="511145.b0637"/>
<dbReference type="jPOST" id="P0AAT6"/>
<dbReference type="PaxDb" id="511145-b0637"/>
<dbReference type="EnsemblBacteria" id="AAC73738">
    <property type="protein sequence ID" value="AAC73738"/>
    <property type="gene ID" value="b0637"/>
</dbReference>
<dbReference type="GeneID" id="93776845"/>
<dbReference type="GeneID" id="945237"/>
<dbReference type="KEGG" id="ecj:JW5090"/>
<dbReference type="KEGG" id="eco:b0637"/>
<dbReference type="KEGG" id="ecoc:C3026_03185"/>
<dbReference type="PATRIC" id="fig|1411691.4.peg.1631"/>
<dbReference type="EchoBASE" id="EB1235"/>
<dbReference type="eggNOG" id="COG0799">
    <property type="taxonomic scope" value="Bacteria"/>
</dbReference>
<dbReference type="HOGENOM" id="CLU_092688_6_1_6"/>
<dbReference type="InParanoid" id="P0AAT6"/>
<dbReference type="OMA" id="YNLEAFW"/>
<dbReference type="OrthoDB" id="9793681at2"/>
<dbReference type="PhylomeDB" id="P0AAT6"/>
<dbReference type="BioCyc" id="EcoCyc:EG11255-MONOMER"/>
<dbReference type="PRO" id="PR:P0AAT6"/>
<dbReference type="Proteomes" id="UP000000625">
    <property type="component" value="Chromosome"/>
</dbReference>
<dbReference type="GO" id="GO:0005829">
    <property type="term" value="C:cytosol"/>
    <property type="evidence" value="ECO:0000314"/>
    <property type="project" value="EcoCyc"/>
</dbReference>
<dbReference type="GO" id="GO:0043023">
    <property type="term" value="F:ribosomal large subunit binding"/>
    <property type="evidence" value="ECO:0000314"/>
    <property type="project" value="EcoCyc"/>
</dbReference>
<dbReference type="GO" id="GO:0042256">
    <property type="term" value="P:cytosolic ribosome assembly"/>
    <property type="evidence" value="ECO:0007669"/>
    <property type="project" value="UniProtKB-UniRule"/>
</dbReference>
<dbReference type="GO" id="GO:0090071">
    <property type="term" value="P:negative regulation of ribosome biogenesis"/>
    <property type="evidence" value="ECO:0000314"/>
    <property type="project" value="UniProtKB"/>
</dbReference>
<dbReference type="GO" id="GO:0017148">
    <property type="term" value="P:negative regulation of translation"/>
    <property type="evidence" value="ECO:0000314"/>
    <property type="project" value="UniProtKB"/>
</dbReference>
<dbReference type="FunFam" id="3.30.460.10:FF:000004">
    <property type="entry name" value="Ribosomal silencing factor RsfS"/>
    <property type="match status" value="1"/>
</dbReference>
<dbReference type="Gene3D" id="3.30.460.10">
    <property type="entry name" value="Beta Polymerase, domain 2"/>
    <property type="match status" value="1"/>
</dbReference>
<dbReference type="HAMAP" id="MF_01477">
    <property type="entry name" value="Iojap_RsfS"/>
    <property type="match status" value="1"/>
</dbReference>
<dbReference type="InterPro" id="IPR004394">
    <property type="entry name" value="Iojap/RsfS/C7orf30"/>
</dbReference>
<dbReference type="InterPro" id="IPR043519">
    <property type="entry name" value="NT_sf"/>
</dbReference>
<dbReference type="NCBIfam" id="TIGR00090">
    <property type="entry name" value="rsfS_iojap_ybeB"/>
    <property type="match status" value="1"/>
</dbReference>
<dbReference type="PANTHER" id="PTHR21043">
    <property type="entry name" value="IOJAP SUPERFAMILY ORTHOLOG"/>
    <property type="match status" value="1"/>
</dbReference>
<dbReference type="PANTHER" id="PTHR21043:SF0">
    <property type="entry name" value="MITOCHONDRIAL ASSEMBLY OF RIBOSOMAL LARGE SUBUNIT PROTEIN 1"/>
    <property type="match status" value="1"/>
</dbReference>
<dbReference type="Pfam" id="PF02410">
    <property type="entry name" value="RsfS"/>
    <property type="match status" value="1"/>
</dbReference>
<dbReference type="SUPFAM" id="SSF81301">
    <property type="entry name" value="Nucleotidyltransferase"/>
    <property type="match status" value="1"/>
</dbReference>
<protein>
    <recommendedName>
        <fullName evidence="1 5">Ribosomal silencing factor RsfS</fullName>
    </recommendedName>
    <alternativeName>
        <fullName evidence="6">Large ribosomal subunit assembly factor RsfS</fullName>
    </alternativeName>
</protein>
<sequence>MQGKALQDFVIDKIDDLKGQDIIALDVQGKSSITDCMIICTGTSSRHVMSIADHVVQESRAAGLLPLGVEGENSADWIVVDLGDVIVHVMQEESRRLYELEKLWS</sequence>
<keyword id="KW-0002">3D-structure</keyword>
<keyword id="KW-0963">Cytoplasm</keyword>
<keyword id="KW-1185">Reference proteome</keyword>
<keyword id="KW-0678">Repressor</keyword>
<keyword id="KW-0690">Ribosome biogenesis</keyword>
<keyword id="KW-0810">Translation regulation</keyword>
<gene>
    <name evidence="1" type="primary">rsfS</name>
    <name evidence="5" type="synonym">rsfA</name>
    <name type="synonym">slm3</name>
    <name type="synonym">ybeB</name>
    <name type="ordered locus">b0637</name>
    <name type="ordered locus">JW5090</name>
</gene>
<proteinExistence type="evidence at protein level"/>
<feature type="chain" id="PRO_0000168674" description="Ribosomal silencing factor RsfS">
    <location>
        <begin position="1"/>
        <end position="105"/>
    </location>
</feature>
<feature type="helix" evidence="12">
    <location>
        <begin position="6"/>
        <end position="16"/>
    </location>
</feature>
<feature type="strand" evidence="12">
    <location>
        <begin position="20"/>
        <end position="25"/>
    </location>
</feature>
<feature type="strand" evidence="12">
    <location>
        <begin position="28"/>
        <end position="30"/>
    </location>
</feature>
<feature type="strand" evidence="12">
    <location>
        <begin position="35"/>
        <end position="44"/>
    </location>
</feature>
<feature type="helix" evidence="12">
    <location>
        <begin position="45"/>
        <end position="62"/>
    </location>
</feature>
<feature type="strand" evidence="12">
    <location>
        <begin position="76"/>
        <end position="81"/>
    </location>
</feature>
<feature type="strand" evidence="12">
    <location>
        <begin position="83"/>
        <end position="91"/>
    </location>
</feature>
<feature type="helix" evidence="12">
    <location>
        <begin position="94"/>
        <end position="97"/>
    </location>
</feature>
<comment type="function">
    <text evidence="1 3">Functions as a ribosomal silencing factor (PubMed:22829778). Interacts with ribosomal protein uL14 (rplN), blocking formation of intersubunit bridge B8. Prevents association of the 30S and 50S ribosomal subunits and the formation of functional ribosomes, thus repressing translation (PubMed:22829778).</text>
</comment>
<comment type="function">
    <text evidence="3 4">Member of a network of 50S ribosomal subunit biogenesis factors (ObgE, RluD, RsfS and DarP(YjgA)) which assembles along the 30S-50S interface, preventing incorrect 23S rRNA structures from forming (PubMed:33639093). Binds to late stage, pre-50S ribosomal subunits where it contacts ObgE and enhances the latter's GTPase activity (PubMed:33639093). Addition to isolated ribosomal subunits partially inhibits their association, preventing translation (PubMed:22829778).</text>
</comment>
<comment type="subunit">
    <text evidence="1 3 4">Interacts with ribosomal protein uL14 (rplN) (PubMed:22829778). In pre-50S ribosomal subunits interacts with uL14 (rplN), bL19 (rplS) and ObgE (PubMed:33639093).</text>
</comment>
<comment type="interaction">
    <interactant intactId="EBI-560192">
        <id>P0AAT6</id>
    </interactant>
    <interactant intactId="EBI-489750">
        <id>P33348</id>
        <label>yehL</label>
    </interactant>
    <organismsDiffer>false</organismsDiffer>
    <experiments>3</experiments>
</comment>
<comment type="subcellular location">
    <subcellularLocation>
        <location evidence="1 2 3 4">Cytoplasm</location>
    </subcellularLocation>
    <text evidence="3 4">Comigrates with the 50S ribosomal subunit in sucrose gradients (PubMed:16980477), specifically with ribosomal protein uL14 (rplN) (PubMed:22829778). In pre-50S ribosomal subunits interacts with uL14 (rplN), bL19 (rplS) and ObgE (PubMed:33639093).</text>
</comment>
<comment type="disruption phenotype">
    <text evidence="3">Cell viability is dramatically reduced in stationary phase, cells have a 10 hour growth block upon transition from rich to poor medium. Protein translation in stationary phase is derepressed.</text>
</comment>
<comment type="similarity">
    <text evidence="1 7">Belongs to the Iojap/RsfS family.</text>
</comment>
<comment type="sequence caution" evidence="7">
    <conflict type="erroneous initiation">
        <sequence resource="EMBL-CDS" id="CAA28199"/>
    </conflict>
    <text>Truncated N-terminus.</text>
</comment>
<organism>
    <name type="scientific">Escherichia coli (strain K12)</name>
    <dbReference type="NCBI Taxonomy" id="83333"/>
    <lineage>
        <taxon>Bacteria</taxon>
        <taxon>Pseudomonadati</taxon>
        <taxon>Pseudomonadota</taxon>
        <taxon>Gammaproteobacteria</taxon>
        <taxon>Enterobacterales</taxon>
        <taxon>Enterobacteriaceae</taxon>
        <taxon>Escherichia</taxon>
    </lineage>
</organism>
<name>IOJAP_ECOLI</name>